<name>RL10_ORITI</name>
<feature type="chain" id="PRO_1000120992" description="Large ribosomal subunit protein uL10">
    <location>
        <begin position="1"/>
        <end position="169"/>
    </location>
</feature>
<comment type="function">
    <text evidence="1">Forms part of the ribosomal stalk, playing a central role in the interaction of the ribosome with GTP-bound translation factors.</text>
</comment>
<comment type="subunit">
    <text evidence="1">Part of the ribosomal stalk of the 50S ribosomal subunit. The N-terminus interacts with L11 and the large rRNA to form the base of the stalk. The C-terminus forms an elongated spine to which L12 dimers bind in a sequential fashion forming a multimeric L10(L12)X complex.</text>
</comment>
<comment type="similarity">
    <text evidence="1">Belongs to the universal ribosomal protein uL10 family.</text>
</comment>
<accession>B3CV57</accession>
<dbReference type="EMBL" id="AP008981">
    <property type="protein sequence ID" value="BAG41254.1"/>
    <property type="molecule type" value="Genomic_DNA"/>
</dbReference>
<dbReference type="RefSeq" id="WP_012462212.1">
    <property type="nucleotide sequence ID" value="NC_010793.1"/>
</dbReference>
<dbReference type="SMR" id="B3CV57"/>
<dbReference type="KEGG" id="ott:OTT_1796"/>
<dbReference type="HOGENOM" id="CLU_092227_1_2_5"/>
<dbReference type="OrthoDB" id="9791972at2"/>
<dbReference type="Proteomes" id="UP000001033">
    <property type="component" value="Chromosome"/>
</dbReference>
<dbReference type="GO" id="GO:0015934">
    <property type="term" value="C:large ribosomal subunit"/>
    <property type="evidence" value="ECO:0007669"/>
    <property type="project" value="InterPro"/>
</dbReference>
<dbReference type="GO" id="GO:0070180">
    <property type="term" value="F:large ribosomal subunit rRNA binding"/>
    <property type="evidence" value="ECO:0007669"/>
    <property type="project" value="UniProtKB-UniRule"/>
</dbReference>
<dbReference type="GO" id="GO:0003735">
    <property type="term" value="F:structural constituent of ribosome"/>
    <property type="evidence" value="ECO:0007669"/>
    <property type="project" value="InterPro"/>
</dbReference>
<dbReference type="GO" id="GO:0006412">
    <property type="term" value="P:translation"/>
    <property type="evidence" value="ECO:0007669"/>
    <property type="project" value="UniProtKB-UniRule"/>
</dbReference>
<dbReference type="CDD" id="cd05797">
    <property type="entry name" value="Ribosomal_L10"/>
    <property type="match status" value="1"/>
</dbReference>
<dbReference type="Gene3D" id="3.30.70.1730">
    <property type="match status" value="1"/>
</dbReference>
<dbReference type="HAMAP" id="MF_00362">
    <property type="entry name" value="Ribosomal_uL10"/>
    <property type="match status" value="1"/>
</dbReference>
<dbReference type="InterPro" id="IPR001790">
    <property type="entry name" value="Ribosomal_uL10"/>
</dbReference>
<dbReference type="InterPro" id="IPR043141">
    <property type="entry name" value="Ribosomal_uL10-like_sf"/>
</dbReference>
<dbReference type="InterPro" id="IPR022973">
    <property type="entry name" value="Ribosomal_uL10_bac"/>
</dbReference>
<dbReference type="InterPro" id="IPR047865">
    <property type="entry name" value="Ribosomal_uL10_bac_type"/>
</dbReference>
<dbReference type="InterPro" id="IPR002363">
    <property type="entry name" value="Ribosomal_uL10_CS_bac"/>
</dbReference>
<dbReference type="NCBIfam" id="NF000955">
    <property type="entry name" value="PRK00099.1-1"/>
    <property type="match status" value="1"/>
</dbReference>
<dbReference type="PANTHER" id="PTHR11560">
    <property type="entry name" value="39S RIBOSOMAL PROTEIN L10, MITOCHONDRIAL"/>
    <property type="match status" value="1"/>
</dbReference>
<dbReference type="Pfam" id="PF00466">
    <property type="entry name" value="Ribosomal_L10"/>
    <property type="match status" value="1"/>
</dbReference>
<dbReference type="SUPFAM" id="SSF160369">
    <property type="entry name" value="Ribosomal protein L10-like"/>
    <property type="match status" value="1"/>
</dbReference>
<dbReference type="PROSITE" id="PS01109">
    <property type="entry name" value="RIBOSOMAL_L10"/>
    <property type="match status" value="1"/>
</dbReference>
<organism>
    <name type="scientific">Orientia tsutsugamushi (strain Ikeda)</name>
    <name type="common">Rickettsia tsutsugamushi</name>
    <dbReference type="NCBI Taxonomy" id="334380"/>
    <lineage>
        <taxon>Bacteria</taxon>
        <taxon>Pseudomonadati</taxon>
        <taxon>Pseudomonadota</taxon>
        <taxon>Alphaproteobacteria</taxon>
        <taxon>Rickettsiales</taxon>
        <taxon>Rickettsiaceae</taxon>
        <taxon>Rickettsieae</taxon>
        <taxon>Orientia</taxon>
    </lineage>
</organism>
<evidence type="ECO:0000255" key="1">
    <source>
        <dbReference type="HAMAP-Rule" id="MF_00362"/>
    </source>
</evidence>
<evidence type="ECO:0000305" key="2"/>
<sequence>MLYSKKKEFVKFLEGIYKNANTIVAIHYHGLTVAQLTQIRKDLRVSGARLKIVKNTLAKIAVANLKVKQVDIFSGPIAIAYSEDYITVPKVILRFADQYPSLKVVGGFVDQKVATMNDIEQLASLATSESHKGNFLSLLQIPIRRFATVSHAPLVKLVTILKNYVNNKS</sequence>
<proteinExistence type="inferred from homology"/>
<keyword id="KW-0687">Ribonucleoprotein</keyword>
<keyword id="KW-0689">Ribosomal protein</keyword>
<keyword id="KW-0694">RNA-binding</keyword>
<keyword id="KW-0699">rRNA-binding</keyword>
<reference key="1">
    <citation type="journal article" date="2008" name="DNA Res.">
        <title>The whole-genome sequencing of the obligate intracellular bacterium Orientia tsutsugamushi revealed massive gene amplification during reductive genome evolution.</title>
        <authorList>
            <person name="Nakayama K."/>
            <person name="Yamashita A."/>
            <person name="Kurokawa K."/>
            <person name="Morimoto T."/>
            <person name="Ogawa M."/>
            <person name="Fukuhara M."/>
            <person name="Urakami H."/>
            <person name="Ohnishi M."/>
            <person name="Uchiyama I."/>
            <person name="Ogura Y."/>
            <person name="Ooka T."/>
            <person name="Oshima K."/>
            <person name="Tamura A."/>
            <person name="Hattori M."/>
            <person name="Hayashi T."/>
        </authorList>
    </citation>
    <scope>NUCLEOTIDE SEQUENCE [LARGE SCALE GENOMIC DNA]</scope>
    <source>
        <strain>Ikeda</strain>
    </source>
</reference>
<protein>
    <recommendedName>
        <fullName evidence="1">Large ribosomal subunit protein uL10</fullName>
    </recommendedName>
    <alternativeName>
        <fullName evidence="2">50S ribosomal protein L10</fullName>
    </alternativeName>
</protein>
<gene>
    <name evidence="1" type="primary">rplJ</name>
    <name type="ordered locus">OTT_1796</name>
</gene>